<accession>Q2FM37</accession>
<organism>
    <name type="scientific">Methanospirillum hungatei JF-1 (strain ATCC 27890 / DSM 864 / NBRC 100397 / JF-1)</name>
    <dbReference type="NCBI Taxonomy" id="323259"/>
    <lineage>
        <taxon>Archaea</taxon>
        <taxon>Methanobacteriati</taxon>
        <taxon>Methanobacteriota</taxon>
        <taxon>Stenosarchaea group</taxon>
        <taxon>Methanomicrobia</taxon>
        <taxon>Methanomicrobiales</taxon>
        <taxon>Methanospirillaceae</taxon>
        <taxon>Methanospirillum</taxon>
    </lineage>
</organism>
<keyword id="KW-0028">Amino-acid biosynthesis</keyword>
<keyword id="KW-0100">Branched-chain amino acid biosynthesis</keyword>
<keyword id="KW-0460">Magnesium</keyword>
<keyword id="KW-0479">Metal-binding</keyword>
<keyword id="KW-0521">NADP</keyword>
<keyword id="KW-0560">Oxidoreductase</keyword>
<keyword id="KW-1185">Reference proteome</keyword>
<reference key="1">
    <citation type="journal article" date="2016" name="Stand. Genomic Sci.">
        <title>Complete genome sequence of Methanospirillum hungatei type strain JF1.</title>
        <authorList>
            <person name="Gunsalus R.P."/>
            <person name="Cook L.E."/>
            <person name="Crable B."/>
            <person name="Rohlin L."/>
            <person name="McDonald E."/>
            <person name="Mouttaki H."/>
            <person name="Sieber J.R."/>
            <person name="Poweleit N."/>
            <person name="Zhou H."/>
            <person name="Lapidus A.L."/>
            <person name="Daligault H.E."/>
            <person name="Land M."/>
            <person name="Gilna P."/>
            <person name="Ivanova N."/>
            <person name="Kyrpides N."/>
            <person name="Culley D.E."/>
            <person name="McInerney M.J."/>
        </authorList>
    </citation>
    <scope>NUCLEOTIDE SEQUENCE [LARGE SCALE GENOMIC DNA]</scope>
    <source>
        <strain>ATCC 27890 / DSM 864 / NBRC 100397 / JF-1</strain>
    </source>
</reference>
<dbReference type="EC" id="1.1.1.86" evidence="1"/>
<dbReference type="EMBL" id="CP000254">
    <property type="protein sequence ID" value="ABD40990.1"/>
    <property type="molecule type" value="Genomic_DNA"/>
</dbReference>
<dbReference type="RefSeq" id="WP_011448267.1">
    <property type="nucleotide sequence ID" value="NC_007796.1"/>
</dbReference>
<dbReference type="SMR" id="Q2FM37"/>
<dbReference type="FunCoup" id="Q2FM37">
    <property type="interactions" value="142"/>
</dbReference>
<dbReference type="STRING" id="323259.Mhun_1245"/>
<dbReference type="EnsemblBacteria" id="ABD40990">
    <property type="protein sequence ID" value="ABD40990"/>
    <property type="gene ID" value="Mhun_1245"/>
</dbReference>
<dbReference type="GeneID" id="3924187"/>
<dbReference type="KEGG" id="mhu:Mhun_1245"/>
<dbReference type="eggNOG" id="arCOG04465">
    <property type="taxonomic scope" value="Archaea"/>
</dbReference>
<dbReference type="HOGENOM" id="CLU_033821_0_1_2"/>
<dbReference type="InParanoid" id="Q2FM37"/>
<dbReference type="OrthoDB" id="6064at2157"/>
<dbReference type="UniPathway" id="UPA00047">
    <property type="reaction ID" value="UER00056"/>
</dbReference>
<dbReference type="UniPathway" id="UPA00049">
    <property type="reaction ID" value="UER00060"/>
</dbReference>
<dbReference type="Proteomes" id="UP000001941">
    <property type="component" value="Chromosome"/>
</dbReference>
<dbReference type="GO" id="GO:0005829">
    <property type="term" value="C:cytosol"/>
    <property type="evidence" value="ECO:0007669"/>
    <property type="project" value="TreeGrafter"/>
</dbReference>
<dbReference type="GO" id="GO:0004455">
    <property type="term" value="F:ketol-acid reductoisomerase activity"/>
    <property type="evidence" value="ECO:0007669"/>
    <property type="project" value="UniProtKB-UniRule"/>
</dbReference>
<dbReference type="GO" id="GO:0000287">
    <property type="term" value="F:magnesium ion binding"/>
    <property type="evidence" value="ECO:0007669"/>
    <property type="project" value="UniProtKB-UniRule"/>
</dbReference>
<dbReference type="GO" id="GO:0050661">
    <property type="term" value="F:NADP binding"/>
    <property type="evidence" value="ECO:0007669"/>
    <property type="project" value="InterPro"/>
</dbReference>
<dbReference type="GO" id="GO:0009097">
    <property type="term" value="P:isoleucine biosynthetic process"/>
    <property type="evidence" value="ECO:0007669"/>
    <property type="project" value="UniProtKB-UniRule"/>
</dbReference>
<dbReference type="GO" id="GO:0009099">
    <property type="term" value="P:L-valine biosynthetic process"/>
    <property type="evidence" value="ECO:0007669"/>
    <property type="project" value="UniProtKB-UniRule"/>
</dbReference>
<dbReference type="FunFam" id="3.40.50.720:FF:000023">
    <property type="entry name" value="Ketol-acid reductoisomerase (NADP(+))"/>
    <property type="match status" value="1"/>
</dbReference>
<dbReference type="Gene3D" id="6.10.240.10">
    <property type="match status" value="1"/>
</dbReference>
<dbReference type="Gene3D" id="3.40.50.720">
    <property type="entry name" value="NAD(P)-binding Rossmann-like Domain"/>
    <property type="match status" value="1"/>
</dbReference>
<dbReference type="HAMAP" id="MF_00435">
    <property type="entry name" value="IlvC"/>
    <property type="match status" value="1"/>
</dbReference>
<dbReference type="InterPro" id="IPR008927">
    <property type="entry name" value="6-PGluconate_DH-like_C_sf"/>
</dbReference>
<dbReference type="InterPro" id="IPR013023">
    <property type="entry name" value="KARI"/>
</dbReference>
<dbReference type="InterPro" id="IPR000506">
    <property type="entry name" value="KARI_C"/>
</dbReference>
<dbReference type="InterPro" id="IPR013116">
    <property type="entry name" value="KARI_N"/>
</dbReference>
<dbReference type="InterPro" id="IPR014359">
    <property type="entry name" value="KARI_prok"/>
</dbReference>
<dbReference type="InterPro" id="IPR036291">
    <property type="entry name" value="NAD(P)-bd_dom_sf"/>
</dbReference>
<dbReference type="NCBIfam" id="TIGR00465">
    <property type="entry name" value="ilvC"/>
    <property type="match status" value="1"/>
</dbReference>
<dbReference type="NCBIfam" id="NF004017">
    <property type="entry name" value="PRK05479.1"/>
    <property type="match status" value="1"/>
</dbReference>
<dbReference type="NCBIfam" id="NF009940">
    <property type="entry name" value="PRK13403.1"/>
    <property type="match status" value="1"/>
</dbReference>
<dbReference type="PANTHER" id="PTHR21371">
    <property type="entry name" value="KETOL-ACID REDUCTOISOMERASE, MITOCHONDRIAL"/>
    <property type="match status" value="1"/>
</dbReference>
<dbReference type="PANTHER" id="PTHR21371:SF1">
    <property type="entry name" value="KETOL-ACID REDUCTOISOMERASE, MITOCHONDRIAL"/>
    <property type="match status" value="1"/>
</dbReference>
<dbReference type="Pfam" id="PF01450">
    <property type="entry name" value="KARI_C"/>
    <property type="match status" value="1"/>
</dbReference>
<dbReference type="Pfam" id="PF07991">
    <property type="entry name" value="KARI_N"/>
    <property type="match status" value="1"/>
</dbReference>
<dbReference type="PIRSF" id="PIRSF000116">
    <property type="entry name" value="IlvC_gammaproteo"/>
    <property type="match status" value="1"/>
</dbReference>
<dbReference type="SUPFAM" id="SSF48179">
    <property type="entry name" value="6-phosphogluconate dehydrogenase C-terminal domain-like"/>
    <property type="match status" value="1"/>
</dbReference>
<dbReference type="SUPFAM" id="SSF51735">
    <property type="entry name" value="NAD(P)-binding Rossmann-fold domains"/>
    <property type="match status" value="1"/>
</dbReference>
<dbReference type="PROSITE" id="PS51851">
    <property type="entry name" value="KARI_C"/>
    <property type="match status" value="1"/>
</dbReference>
<dbReference type="PROSITE" id="PS51850">
    <property type="entry name" value="KARI_N"/>
    <property type="match status" value="1"/>
</dbReference>
<proteinExistence type="inferred from homology"/>
<name>ILVC_METHJ</name>
<protein>
    <recommendedName>
        <fullName evidence="1">Ketol-acid reductoisomerase (NADP(+))</fullName>
        <shortName evidence="1">KARI</shortName>
        <ecNumber evidence="1">1.1.1.86</ecNumber>
    </recommendedName>
    <alternativeName>
        <fullName evidence="1">Acetohydroxy-acid isomeroreductase</fullName>
        <shortName evidence="1">AHIR</shortName>
    </alternativeName>
    <alternativeName>
        <fullName evidence="1">Alpha-keto-beta-hydroxylacyl reductoisomerase</fullName>
    </alternativeName>
    <alternativeName>
        <fullName evidence="1">Ketol-acid reductoisomerase type 1</fullName>
    </alternativeName>
    <alternativeName>
        <fullName evidence="1">Ketol-acid reductoisomerase type I</fullName>
    </alternativeName>
</protein>
<comment type="function">
    <text evidence="1">Involved in the biosynthesis of branched-chain amino acids (BCAA). Catalyzes an alkyl-migration followed by a ketol-acid reduction of (S)-2-acetolactate (S2AL) to yield (R)-2,3-dihydroxy-isovalerate. In the isomerase reaction, S2AL is rearranged via a Mg-dependent methyl migration to produce 3-hydroxy-3-methyl-2-ketobutyrate (HMKB). In the reductase reaction, this 2-ketoacid undergoes a metal-dependent reduction by NADPH to yield (R)-2,3-dihydroxy-isovalerate.</text>
</comment>
<comment type="catalytic activity">
    <reaction evidence="1">
        <text>(2R)-2,3-dihydroxy-3-methylbutanoate + NADP(+) = (2S)-2-acetolactate + NADPH + H(+)</text>
        <dbReference type="Rhea" id="RHEA:22068"/>
        <dbReference type="ChEBI" id="CHEBI:15378"/>
        <dbReference type="ChEBI" id="CHEBI:49072"/>
        <dbReference type="ChEBI" id="CHEBI:57783"/>
        <dbReference type="ChEBI" id="CHEBI:58349"/>
        <dbReference type="ChEBI" id="CHEBI:58476"/>
        <dbReference type="EC" id="1.1.1.86"/>
    </reaction>
</comment>
<comment type="catalytic activity">
    <reaction evidence="1">
        <text>(2R,3R)-2,3-dihydroxy-3-methylpentanoate + NADP(+) = (S)-2-ethyl-2-hydroxy-3-oxobutanoate + NADPH + H(+)</text>
        <dbReference type="Rhea" id="RHEA:13493"/>
        <dbReference type="ChEBI" id="CHEBI:15378"/>
        <dbReference type="ChEBI" id="CHEBI:49256"/>
        <dbReference type="ChEBI" id="CHEBI:49258"/>
        <dbReference type="ChEBI" id="CHEBI:57783"/>
        <dbReference type="ChEBI" id="CHEBI:58349"/>
        <dbReference type="EC" id="1.1.1.86"/>
    </reaction>
</comment>
<comment type="cofactor">
    <cofactor evidence="1">
        <name>Mg(2+)</name>
        <dbReference type="ChEBI" id="CHEBI:18420"/>
    </cofactor>
    <text evidence="1">Binds 2 magnesium ions per subunit.</text>
</comment>
<comment type="pathway">
    <text evidence="1">Amino-acid biosynthesis; L-isoleucine biosynthesis; L-isoleucine from 2-oxobutanoate: step 2/4.</text>
</comment>
<comment type="pathway">
    <text evidence="1">Amino-acid biosynthesis; L-valine biosynthesis; L-valine from pyruvate: step 2/4.</text>
</comment>
<comment type="similarity">
    <text evidence="1">Belongs to the ketol-acid reductoisomerase family.</text>
</comment>
<evidence type="ECO:0000255" key="1">
    <source>
        <dbReference type="HAMAP-Rule" id="MF_00435"/>
    </source>
</evidence>
<evidence type="ECO:0000255" key="2">
    <source>
        <dbReference type="PROSITE-ProRule" id="PRU01197"/>
    </source>
</evidence>
<evidence type="ECO:0000255" key="3">
    <source>
        <dbReference type="PROSITE-ProRule" id="PRU01198"/>
    </source>
</evidence>
<feature type="chain" id="PRO_0000252803" description="Ketol-acid reductoisomerase (NADP(+))">
    <location>
        <begin position="1"/>
        <end position="331"/>
    </location>
</feature>
<feature type="domain" description="KARI N-terminal Rossmann" evidence="2">
    <location>
        <begin position="2"/>
        <end position="181"/>
    </location>
</feature>
<feature type="domain" description="KARI C-terminal knotted" evidence="3">
    <location>
        <begin position="182"/>
        <end position="327"/>
    </location>
</feature>
<feature type="active site" evidence="1">
    <location>
        <position position="107"/>
    </location>
</feature>
<feature type="binding site" evidence="1">
    <location>
        <begin position="25"/>
        <end position="28"/>
    </location>
    <ligand>
        <name>NADP(+)</name>
        <dbReference type="ChEBI" id="CHEBI:58349"/>
    </ligand>
</feature>
<feature type="binding site" evidence="1">
    <location>
        <position position="48"/>
    </location>
    <ligand>
        <name>NADP(+)</name>
        <dbReference type="ChEBI" id="CHEBI:58349"/>
    </ligand>
</feature>
<feature type="binding site" evidence="1">
    <location>
        <position position="52"/>
    </location>
    <ligand>
        <name>NADP(+)</name>
        <dbReference type="ChEBI" id="CHEBI:58349"/>
    </ligand>
</feature>
<feature type="binding site" evidence="1">
    <location>
        <begin position="82"/>
        <end position="85"/>
    </location>
    <ligand>
        <name>NADP(+)</name>
        <dbReference type="ChEBI" id="CHEBI:58349"/>
    </ligand>
</feature>
<feature type="binding site" evidence="1">
    <location>
        <position position="133"/>
    </location>
    <ligand>
        <name>NADP(+)</name>
        <dbReference type="ChEBI" id="CHEBI:58349"/>
    </ligand>
</feature>
<feature type="binding site" evidence="1">
    <location>
        <position position="190"/>
    </location>
    <ligand>
        <name>Mg(2+)</name>
        <dbReference type="ChEBI" id="CHEBI:18420"/>
        <label>1</label>
    </ligand>
</feature>
<feature type="binding site" evidence="1">
    <location>
        <position position="190"/>
    </location>
    <ligand>
        <name>Mg(2+)</name>
        <dbReference type="ChEBI" id="CHEBI:18420"/>
        <label>2</label>
    </ligand>
</feature>
<feature type="binding site" evidence="1">
    <location>
        <position position="194"/>
    </location>
    <ligand>
        <name>Mg(2+)</name>
        <dbReference type="ChEBI" id="CHEBI:18420"/>
        <label>1</label>
    </ligand>
</feature>
<feature type="binding site" evidence="1">
    <location>
        <position position="226"/>
    </location>
    <ligand>
        <name>Mg(2+)</name>
        <dbReference type="ChEBI" id="CHEBI:18420"/>
        <label>2</label>
    </ligand>
</feature>
<feature type="binding site" evidence="1">
    <location>
        <position position="230"/>
    </location>
    <ligand>
        <name>Mg(2+)</name>
        <dbReference type="ChEBI" id="CHEBI:18420"/>
        <label>2</label>
    </ligand>
</feature>
<feature type="binding site" evidence="1">
    <location>
        <position position="251"/>
    </location>
    <ligand>
        <name>substrate</name>
    </ligand>
</feature>
<gene>
    <name evidence="1" type="primary">ilvC</name>
    <name type="ordered locus">Mhun_1245</name>
</gene>
<sequence>MLEKYYDKDADMSAISSKTIAVIGYGSQGRGQALNLKDSGLKVIIGLRPGKSWDLAKSEGFEVMDVANAAKKADIIQILIPDEQQGAVYKTQIAQGLTKGKTLMFSHGFNIHFGQIVPPADVDVIMVAPKGPGHMVRRTYTEGKGVPALIAIHQDVSGNGKKTALAYAKGIGATRAVVFETSFREETETDLFGEQAVLCGGMTSLIKAGFETLVEAGYAPEMAYLEVLHETKLIVDLIYEGGFTKMRNSISNTAQFGDLTRGPRVIGQESYLAMQEILEEIQTGAFAKEWMLENMVNRPVFNALTRADEEHLIEEVGKEIRATMPQFKDLK</sequence>